<name>UXUA_MARMS</name>
<gene>
    <name evidence="1" type="primary">uxuA</name>
    <name type="ordered locus">Mmwyl1_2778</name>
</gene>
<evidence type="ECO:0000255" key="1">
    <source>
        <dbReference type="HAMAP-Rule" id="MF_00106"/>
    </source>
</evidence>
<reference key="1">
    <citation type="submission" date="2007-06" db="EMBL/GenBank/DDBJ databases">
        <title>Complete sequence of Marinomonas sp. MWYL1.</title>
        <authorList>
            <consortium name="US DOE Joint Genome Institute"/>
            <person name="Copeland A."/>
            <person name="Lucas S."/>
            <person name="Lapidus A."/>
            <person name="Barry K."/>
            <person name="Glavina del Rio T."/>
            <person name="Dalin E."/>
            <person name="Tice H."/>
            <person name="Pitluck S."/>
            <person name="Kiss H."/>
            <person name="Brettin T."/>
            <person name="Bruce D."/>
            <person name="Detter J.C."/>
            <person name="Han C."/>
            <person name="Schmutz J."/>
            <person name="Larimer F."/>
            <person name="Land M."/>
            <person name="Hauser L."/>
            <person name="Kyrpides N."/>
            <person name="Kim E."/>
            <person name="Johnston A.W.B."/>
            <person name="Todd J.D."/>
            <person name="Rogers R."/>
            <person name="Wexler M."/>
            <person name="Bond P.L."/>
            <person name="Li Y."/>
            <person name="Richardson P."/>
        </authorList>
    </citation>
    <scope>NUCLEOTIDE SEQUENCE [LARGE SCALE GENOMIC DNA]</scope>
    <source>
        <strain>MWYL1</strain>
    </source>
</reference>
<accession>A6VZ12</accession>
<keyword id="KW-0408">Iron</keyword>
<keyword id="KW-0456">Lyase</keyword>
<keyword id="KW-0464">Manganese</keyword>
<organism>
    <name type="scientific">Marinomonas sp. (strain MWYL1)</name>
    <dbReference type="NCBI Taxonomy" id="400668"/>
    <lineage>
        <taxon>Bacteria</taxon>
        <taxon>Pseudomonadati</taxon>
        <taxon>Pseudomonadota</taxon>
        <taxon>Gammaproteobacteria</taxon>
        <taxon>Oceanospirillales</taxon>
        <taxon>Oceanospirillaceae</taxon>
        <taxon>Marinomonas</taxon>
    </lineage>
</organism>
<protein>
    <recommendedName>
        <fullName evidence="1">Mannonate dehydratase</fullName>
        <ecNumber evidence="1">4.2.1.8</ecNumber>
    </recommendedName>
    <alternativeName>
        <fullName evidence="1">D-mannonate hydro-lyase</fullName>
    </alternativeName>
</protein>
<sequence length="391" mass="44006">MEHTWRWFGPNDETTLTDIRQTGATGVVTALHEIPNGEVWPVEAIKARKAMIEAHTLRWSVVESVPVHEDIKKRTGNYQEYIQNYKQTLLNLAECGIDTVCYNFMPVLDWTRTDLDYELPDGSRALRFDQTAFAAFELYILERKGAESEYSDEEKAQAKIFLENLKAEDKDRLVANIIAGLPGSEESYTIEQFREKLDEYAGIDKDKLREHLKLFLEEIVPAAEQGGLRLAIHPDDPPRPILGLPRVVSVKDDIEWLLGAVPSPVNGITLCTGSYGVRADNDLVDMVQRFGSNIFFTHLRSTKREEVAGSFHEASHLGGDVDMVGVVRALLVEEKKRNDNNAPSLIPMRPDHGHQILNDLEKNSKPGYSKLGRMKGLAEVRGLELGLKSTL</sequence>
<dbReference type="EC" id="4.2.1.8" evidence="1"/>
<dbReference type="EMBL" id="CP000749">
    <property type="protein sequence ID" value="ABR71691.1"/>
    <property type="molecule type" value="Genomic_DNA"/>
</dbReference>
<dbReference type="SMR" id="A6VZ12"/>
<dbReference type="STRING" id="400668.Mmwyl1_2778"/>
<dbReference type="KEGG" id="mmw:Mmwyl1_2778"/>
<dbReference type="eggNOG" id="COG1312">
    <property type="taxonomic scope" value="Bacteria"/>
</dbReference>
<dbReference type="HOGENOM" id="CLU_058621_2_0_6"/>
<dbReference type="OrthoDB" id="9780250at2"/>
<dbReference type="UniPathway" id="UPA00246"/>
<dbReference type="GO" id="GO:0008198">
    <property type="term" value="F:ferrous iron binding"/>
    <property type="evidence" value="ECO:0007669"/>
    <property type="project" value="TreeGrafter"/>
</dbReference>
<dbReference type="GO" id="GO:0030145">
    <property type="term" value="F:manganese ion binding"/>
    <property type="evidence" value="ECO:0007669"/>
    <property type="project" value="TreeGrafter"/>
</dbReference>
<dbReference type="GO" id="GO:0008927">
    <property type="term" value="F:mannonate dehydratase activity"/>
    <property type="evidence" value="ECO:0007669"/>
    <property type="project" value="UniProtKB-UniRule"/>
</dbReference>
<dbReference type="GO" id="GO:0042840">
    <property type="term" value="P:D-glucuronate catabolic process"/>
    <property type="evidence" value="ECO:0007669"/>
    <property type="project" value="TreeGrafter"/>
</dbReference>
<dbReference type="Gene3D" id="3.20.20.150">
    <property type="entry name" value="Divalent-metal-dependent TIM barrel enzymes"/>
    <property type="match status" value="1"/>
</dbReference>
<dbReference type="HAMAP" id="MF_00106">
    <property type="entry name" value="UxuA"/>
    <property type="match status" value="1"/>
</dbReference>
<dbReference type="InterPro" id="IPR004628">
    <property type="entry name" value="Man_deHydtase"/>
</dbReference>
<dbReference type="InterPro" id="IPR036237">
    <property type="entry name" value="Xyl_isomerase-like_sf"/>
</dbReference>
<dbReference type="NCBIfam" id="NF003027">
    <property type="entry name" value="PRK03906.1"/>
    <property type="match status" value="1"/>
</dbReference>
<dbReference type="NCBIfam" id="TIGR00695">
    <property type="entry name" value="uxuA"/>
    <property type="match status" value="1"/>
</dbReference>
<dbReference type="PANTHER" id="PTHR30387">
    <property type="entry name" value="MANNONATE DEHYDRATASE"/>
    <property type="match status" value="1"/>
</dbReference>
<dbReference type="PANTHER" id="PTHR30387:SF2">
    <property type="entry name" value="MANNONATE DEHYDRATASE"/>
    <property type="match status" value="1"/>
</dbReference>
<dbReference type="Pfam" id="PF03786">
    <property type="entry name" value="UxuA"/>
    <property type="match status" value="1"/>
</dbReference>
<dbReference type="PIRSF" id="PIRSF016049">
    <property type="entry name" value="Man_dehyd"/>
    <property type="match status" value="1"/>
</dbReference>
<dbReference type="SUPFAM" id="SSF51658">
    <property type="entry name" value="Xylose isomerase-like"/>
    <property type="match status" value="1"/>
</dbReference>
<comment type="function">
    <text evidence="1">Catalyzes the dehydration of D-mannonate.</text>
</comment>
<comment type="catalytic activity">
    <reaction evidence="1">
        <text>D-mannonate = 2-dehydro-3-deoxy-D-gluconate + H2O</text>
        <dbReference type="Rhea" id="RHEA:20097"/>
        <dbReference type="ChEBI" id="CHEBI:15377"/>
        <dbReference type="ChEBI" id="CHEBI:17767"/>
        <dbReference type="ChEBI" id="CHEBI:57990"/>
        <dbReference type="EC" id="4.2.1.8"/>
    </reaction>
</comment>
<comment type="cofactor">
    <cofactor evidence="1">
        <name>Fe(2+)</name>
        <dbReference type="ChEBI" id="CHEBI:29033"/>
    </cofactor>
    <cofactor evidence="1">
        <name>Mn(2+)</name>
        <dbReference type="ChEBI" id="CHEBI:29035"/>
    </cofactor>
</comment>
<comment type="pathway">
    <text evidence="1">Carbohydrate metabolism; pentose and glucuronate interconversion.</text>
</comment>
<comment type="similarity">
    <text evidence="1">Belongs to the mannonate dehydratase family.</text>
</comment>
<proteinExistence type="inferred from homology"/>
<feature type="chain" id="PRO_1000075902" description="Mannonate dehydratase">
    <location>
        <begin position="1"/>
        <end position="391"/>
    </location>
</feature>